<organism>
    <name type="scientific">Geobacillus kaustophilus (strain HTA426)</name>
    <dbReference type="NCBI Taxonomy" id="235909"/>
    <lineage>
        <taxon>Bacteria</taxon>
        <taxon>Bacillati</taxon>
        <taxon>Bacillota</taxon>
        <taxon>Bacilli</taxon>
        <taxon>Bacillales</taxon>
        <taxon>Anoxybacillaceae</taxon>
        <taxon>Geobacillus</taxon>
        <taxon>Geobacillus thermoleovorans group</taxon>
    </lineage>
</organism>
<name>LEUD_GEOKA</name>
<comment type="function">
    <text evidence="1">Catalyzes the isomerization between 2-isopropylmalate and 3-isopropylmalate, via the formation of 2-isopropylmaleate.</text>
</comment>
<comment type="catalytic activity">
    <reaction evidence="1">
        <text>(2R,3S)-3-isopropylmalate = (2S)-2-isopropylmalate</text>
        <dbReference type="Rhea" id="RHEA:32287"/>
        <dbReference type="ChEBI" id="CHEBI:1178"/>
        <dbReference type="ChEBI" id="CHEBI:35121"/>
        <dbReference type="EC" id="4.2.1.33"/>
    </reaction>
</comment>
<comment type="pathway">
    <text evidence="1">Amino-acid biosynthesis; L-leucine biosynthesis; L-leucine from 3-methyl-2-oxobutanoate: step 2/4.</text>
</comment>
<comment type="subunit">
    <text evidence="1">Heterodimer of LeuC and LeuD.</text>
</comment>
<comment type="similarity">
    <text evidence="1">Belongs to the LeuD family. LeuD type 1 subfamily.</text>
</comment>
<evidence type="ECO:0000255" key="1">
    <source>
        <dbReference type="HAMAP-Rule" id="MF_01031"/>
    </source>
</evidence>
<feature type="chain" id="PRO_0000141822" description="3-isopropylmalate dehydratase small subunit">
    <location>
        <begin position="1"/>
        <end position="197"/>
    </location>
</feature>
<dbReference type="EC" id="4.2.1.33" evidence="1"/>
<dbReference type="EMBL" id="BA000043">
    <property type="protein sequence ID" value="BAD76940.1"/>
    <property type="molecule type" value="Genomic_DNA"/>
</dbReference>
<dbReference type="RefSeq" id="WP_011232131.1">
    <property type="nucleotide sequence ID" value="NC_006510.1"/>
</dbReference>
<dbReference type="SMR" id="Q5KWJ6"/>
<dbReference type="STRING" id="235909.GK2655"/>
<dbReference type="GeneID" id="89611147"/>
<dbReference type="KEGG" id="gka:GK2655"/>
<dbReference type="eggNOG" id="COG0066">
    <property type="taxonomic scope" value="Bacteria"/>
</dbReference>
<dbReference type="HOGENOM" id="CLU_081378_0_3_9"/>
<dbReference type="UniPathway" id="UPA00048">
    <property type="reaction ID" value="UER00071"/>
</dbReference>
<dbReference type="Proteomes" id="UP000001172">
    <property type="component" value="Chromosome"/>
</dbReference>
<dbReference type="GO" id="GO:0009316">
    <property type="term" value="C:3-isopropylmalate dehydratase complex"/>
    <property type="evidence" value="ECO:0007669"/>
    <property type="project" value="InterPro"/>
</dbReference>
<dbReference type="GO" id="GO:0003861">
    <property type="term" value="F:3-isopropylmalate dehydratase activity"/>
    <property type="evidence" value="ECO:0007669"/>
    <property type="project" value="UniProtKB-UniRule"/>
</dbReference>
<dbReference type="GO" id="GO:0009098">
    <property type="term" value="P:L-leucine biosynthetic process"/>
    <property type="evidence" value="ECO:0007669"/>
    <property type="project" value="UniProtKB-UniRule"/>
</dbReference>
<dbReference type="CDD" id="cd01577">
    <property type="entry name" value="IPMI_Swivel"/>
    <property type="match status" value="1"/>
</dbReference>
<dbReference type="FunFam" id="3.20.19.10:FF:000003">
    <property type="entry name" value="3-isopropylmalate dehydratase small subunit"/>
    <property type="match status" value="1"/>
</dbReference>
<dbReference type="Gene3D" id="3.20.19.10">
    <property type="entry name" value="Aconitase, domain 4"/>
    <property type="match status" value="1"/>
</dbReference>
<dbReference type="HAMAP" id="MF_01031">
    <property type="entry name" value="LeuD_type1"/>
    <property type="match status" value="1"/>
</dbReference>
<dbReference type="InterPro" id="IPR004431">
    <property type="entry name" value="3-IsopropMal_deHydase_ssu"/>
</dbReference>
<dbReference type="InterPro" id="IPR015928">
    <property type="entry name" value="Aconitase/3IPM_dehydase_swvl"/>
</dbReference>
<dbReference type="InterPro" id="IPR000573">
    <property type="entry name" value="AconitaseA/IPMdHydase_ssu_swvl"/>
</dbReference>
<dbReference type="InterPro" id="IPR033940">
    <property type="entry name" value="IPMI_Swivel"/>
</dbReference>
<dbReference type="InterPro" id="IPR050075">
    <property type="entry name" value="LeuD"/>
</dbReference>
<dbReference type="NCBIfam" id="TIGR00171">
    <property type="entry name" value="leuD"/>
    <property type="match status" value="1"/>
</dbReference>
<dbReference type="NCBIfam" id="NF002458">
    <property type="entry name" value="PRK01641.1"/>
    <property type="match status" value="1"/>
</dbReference>
<dbReference type="PANTHER" id="PTHR43345:SF5">
    <property type="entry name" value="3-ISOPROPYLMALATE DEHYDRATASE SMALL SUBUNIT"/>
    <property type="match status" value="1"/>
</dbReference>
<dbReference type="PANTHER" id="PTHR43345">
    <property type="entry name" value="3-ISOPROPYLMALATE DEHYDRATASE SMALL SUBUNIT 2-RELATED-RELATED"/>
    <property type="match status" value="1"/>
</dbReference>
<dbReference type="Pfam" id="PF00694">
    <property type="entry name" value="Aconitase_C"/>
    <property type="match status" value="1"/>
</dbReference>
<dbReference type="SUPFAM" id="SSF52016">
    <property type="entry name" value="LeuD/IlvD-like"/>
    <property type="match status" value="1"/>
</dbReference>
<protein>
    <recommendedName>
        <fullName evidence="1">3-isopropylmalate dehydratase small subunit</fullName>
        <ecNumber evidence="1">4.2.1.33</ecNumber>
    </recommendedName>
    <alternativeName>
        <fullName evidence="1">Alpha-IPM isomerase</fullName>
        <shortName evidence="1">IPMI</shortName>
    </alternativeName>
    <alternativeName>
        <fullName evidence="1">Isopropylmalate isomerase</fullName>
    </alternativeName>
</protein>
<keyword id="KW-0028">Amino-acid biosynthesis</keyword>
<keyword id="KW-0100">Branched-chain amino acid biosynthesis</keyword>
<keyword id="KW-0432">Leucine biosynthesis</keyword>
<keyword id="KW-0456">Lyase</keyword>
<keyword id="KW-1185">Reference proteome</keyword>
<proteinExistence type="inferred from homology"/>
<sequence>MKPFTIHRGKTAGIDRANIDTDQIIPKQFLKRIERTGFGQFLFYDWRYLSDGTPNPEFELNRPENEGATILVADENFGCGSSREHAPWALQDYGFRVIIAPSFADIFYNNCLKNGLLPIRLDKEDVRYLLRQSERADYELTVSLEEQRVFDDEGFSRPFDIDPYRKQLLLKGWDEIDLTFVYEAHIAAYERRHCPRP</sequence>
<reference key="1">
    <citation type="journal article" date="2004" name="Nucleic Acids Res.">
        <title>Thermoadaptation trait revealed by the genome sequence of thermophilic Geobacillus kaustophilus.</title>
        <authorList>
            <person name="Takami H."/>
            <person name="Takaki Y."/>
            <person name="Chee G.-J."/>
            <person name="Nishi S."/>
            <person name="Shimamura S."/>
            <person name="Suzuki H."/>
            <person name="Matsui S."/>
            <person name="Uchiyama I."/>
        </authorList>
    </citation>
    <scope>NUCLEOTIDE SEQUENCE [LARGE SCALE GENOMIC DNA]</scope>
    <source>
        <strain>HTA426</strain>
    </source>
</reference>
<accession>Q5KWJ6</accession>
<gene>
    <name evidence="1" type="primary">leuD</name>
    <name type="ordered locus">GK2655</name>
</gene>